<organism>
    <name type="scientific">Escherichia coli O6:H1 (strain CFT073 / ATCC 700928 / UPEC)</name>
    <dbReference type="NCBI Taxonomy" id="199310"/>
    <lineage>
        <taxon>Bacteria</taxon>
        <taxon>Pseudomonadati</taxon>
        <taxon>Pseudomonadota</taxon>
        <taxon>Gammaproteobacteria</taxon>
        <taxon>Enterobacterales</taxon>
        <taxon>Enterobacteriaceae</taxon>
        <taxon>Escherichia</taxon>
    </lineage>
</organism>
<evidence type="ECO:0000255" key="1">
    <source>
        <dbReference type="HAMAP-Rule" id="MF_02087"/>
    </source>
</evidence>
<proteinExistence type="inferred from homology"/>
<keyword id="KW-0663">Pyridoxal phosphate</keyword>
<keyword id="KW-1185">Reference proteome</keyword>
<feature type="chain" id="PRO_0000163197" description="Pyridoxal phosphate homeostasis protein">
    <location>
        <begin position="1"/>
        <end position="234"/>
    </location>
</feature>
<feature type="modified residue" description="N6-(pyridoxal phosphate)lysine" evidence="1">
    <location>
        <position position="36"/>
    </location>
</feature>
<name>PLPHP_ECOL6</name>
<reference key="1">
    <citation type="journal article" date="2002" name="Proc. Natl. Acad. Sci. U.S.A.">
        <title>Extensive mosaic structure revealed by the complete genome sequence of uropathogenic Escherichia coli.</title>
        <authorList>
            <person name="Welch R.A."/>
            <person name="Burland V."/>
            <person name="Plunkett G. III"/>
            <person name="Redford P."/>
            <person name="Roesch P."/>
            <person name="Rasko D."/>
            <person name="Buckles E.L."/>
            <person name="Liou S.-R."/>
            <person name="Boutin A."/>
            <person name="Hackett J."/>
            <person name="Stroud D."/>
            <person name="Mayhew G.F."/>
            <person name="Rose D.J."/>
            <person name="Zhou S."/>
            <person name="Schwartz D.C."/>
            <person name="Perna N.T."/>
            <person name="Mobley H.L.T."/>
            <person name="Donnenberg M.S."/>
            <person name="Blattner F.R."/>
        </authorList>
    </citation>
    <scope>NUCLEOTIDE SEQUENCE [LARGE SCALE GENOMIC DNA]</scope>
    <source>
        <strain>CFT073 / ATCC 700928 / UPEC</strain>
    </source>
</reference>
<protein>
    <recommendedName>
        <fullName evidence="1">Pyridoxal phosphate homeostasis protein</fullName>
        <shortName evidence="1">PLP homeostasis protein</shortName>
    </recommendedName>
</protein>
<dbReference type="EMBL" id="AE014075">
    <property type="protein sequence ID" value="AAN81985.1"/>
    <property type="molecule type" value="Genomic_DNA"/>
</dbReference>
<dbReference type="RefSeq" id="WP_000997795.1">
    <property type="nucleotide sequence ID" value="NZ_CP051263.1"/>
</dbReference>
<dbReference type="SMR" id="P67081"/>
<dbReference type="STRING" id="199310.c3537"/>
<dbReference type="GeneID" id="93779046"/>
<dbReference type="KEGG" id="ecc:c3537"/>
<dbReference type="eggNOG" id="COG0325">
    <property type="taxonomic scope" value="Bacteria"/>
</dbReference>
<dbReference type="HOGENOM" id="CLU_059988_0_1_6"/>
<dbReference type="BioCyc" id="ECOL199310:C3537-MONOMER"/>
<dbReference type="Proteomes" id="UP000001410">
    <property type="component" value="Chromosome"/>
</dbReference>
<dbReference type="GO" id="GO:0030170">
    <property type="term" value="F:pyridoxal phosphate binding"/>
    <property type="evidence" value="ECO:0007669"/>
    <property type="project" value="UniProtKB-UniRule"/>
</dbReference>
<dbReference type="CDD" id="cd06824">
    <property type="entry name" value="PLPDE_III_Yggs_like"/>
    <property type="match status" value="1"/>
</dbReference>
<dbReference type="FunFam" id="3.20.20.10:FF:000004">
    <property type="entry name" value="Pyridoxal phosphate homeostasis protein"/>
    <property type="match status" value="1"/>
</dbReference>
<dbReference type="Gene3D" id="3.20.20.10">
    <property type="entry name" value="Alanine racemase"/>
    <property type="match status" value="1"/>
</dbReference>
<dbReference type="HAMAP" id="MF_02087">
    <property type="entry name" value="PLP_homeostasis"/>
    <property type="match status" value="1"/>
</dbReference>
<dbReference type="InterPro" id="IPR001608">
    <property type="entry name" value="Ala_racemase_N"/>
</dbReference>
<dbReference type="InterPro" id="IPR029066">
    <property type="entry name" value="PLP-binding_barrel"/>
</dbReference>
<dbReference type="InterPro" id="IPR011078">
    <property type="entry name" value="PyrdxlP_homeostasis"/>
</dbReference>
<dbReference type="NCBIfam" id="TIGR00044">
    <property type="entry name" value="YggS family pyridoxal phosphate-dependent enzyme"/>
    <property type="match status" value="1"/>
</dbReference>
<dbReference type="PANTHER" id="PTHR10146">
    <property type="entry name" value="PROLINE SYNTHETASE CO-TRANSCRIBED BACTERIAL HOMOLOG PROTEIN"/>
    <property type="match status" value="1"/>
</dbReference>
<dbReference type="PANTHER" id="PTHR10146:SF14">
    <property type="entry name" value="PYRIDOXAL PHOSPHATE HOMEOSTASIS PROTEIN"/>
    <property type="match status" value="1"/>
</dbReference>
<dbReference type="Pfam" id="PF01168">
    <property type="entry name" value="Ala_racemase_N"/>
    <property type="match status" value="1"/>
</dbReference>
<dbReference type="PIRSF" id="PIRSF004848">
    <property type="entry name" value="YBL036c_PLPDEIII"/>
    <property type="match status" value="1"/>
</dbReference>
<dbReference type="SUPFAM" id="SSF51419">
    <property type="entry name" value="PLP-binding barrel"/>
    <property type="match status" value="1"/>
</dbReference>
<dbReference type="PROSITE" id="PS01211">
    <property type="entry name" value="UPF0001"/>
    <property type="match status" value="1"/>
</dbReference>
<accession>P67081</accession>
<accession>P52054</accession>
<gene>
    <name type="primary">yggS</name>
    <name type="ordered locus">c3537</name>
</gene>
<comment type="function">
    <text evidence="1">Pyridoxal 5'-phosphate (PLP)-binding protein, which is involved in PLP homeostasis.</text>
</comment>
<comment type="subunit">
    <text evidence="1">Monomer.</text>
</comment>
<comment type="similarity">
    <text evidence="1">Belongs to the pyridoxal phosphate-binding protein YggS/PROSC family.</text>
</comment>
<sequence>MNDIAHNLAQVRDKISAAATRCGRSPEEITLLAVSKTKPASAIAEAIDAGQRQFGENYVQEGVDKIRHFQELGVTGLEWHFIGPLQSNKSRLVAEHFDWCHTIDRLRIATRLNDQRPAELPPLNVLIQINISDENSKSGIQLAELDELAAAVAELPRLRLRGLMAIPAPESEYVRQFEVARQMAVAFAGLKTRYPHIDTLSLGMSDDMEAAIAAGSTMVRIGTAIFGARDYSKK</sequence>